<comment type="function">
    <text evidence="1">Catalyzes the acyloin condensation reaction between C atoms 2 and 3 of pyruvate and glyceraldehyde 3-phosphate to yield 1-deoxy-D-xylulose-5-phosphate (DXP).</text>
</comment>
<comment type="catalytic activity">
    <reaction evidence="1">
        <text>D-glyceraldehyde 3-phosphate + pyruvate + H(+) = 1-deoxy-D-xylulose 5-phosphate + CO2</text>
        <dbReference type="Rhea" id="RHEA:12605"/>
        <dbReference type="ChEBI" id="CHEBI:15361"/>
        <dbReference type="ChEBI" id="CHEBI:15378"/>
        <dbReference type="ChEBI" id="CHEBI:16526"/>
        <dbReference type="ChEBI" id="CHEBI:57792"/>
        <dbReference type="ChEBI" id="CHEBI:59776"/>
        <dbReference type="EC" id="2.2.1.7"/>
    </reaction>
</comment>
<comment type="cofactor">
    <cofactor evidence="1">
        <name>Mg(2+)</name>
        <dbReference type="ChEBI" id="CHEBI:18420"/>
    </cofactor>
    <text evidence="1">Binds 1 Mg(2+) ion per subunit.</text>
</comment>
<comment type="cofactor">
    <cofactor evidence="1">
        <name>thiamine diphosphate</name>
        <dbReference type="ChEBI" id="CHEBI:58937"/>
    </cofactor>
    <text evidence="1">Binds 1 thiamine pyrophosphate per subunit.</text>
</comment>
<comment type="pathway">
    <text evidence="1">Metabolic intermediate biosynthesis; 1-deoxy-D-xylulose 5-phosphate biosynthesis; 1-deoxy-D-xylulose 5-phosphate from D-glyceraldehyde 3-phosphate and pyruvate: step 1/1.</text>
</comment>
<comment type="subunit">
    <text evidence="1">Homodimer.</text>
</comment>
<comment type="similarity">
    <text evidence="1">Belongs to the transketolase family. DXPS subfamily.</text>
</comment>
<gene>
    <name evidence="1" type="primary">dxs</name>
    <name type="ordered locus">CPR_1787</name>
</gene>
<reference key="1">
    <citation type="journal article" date="2006" name="Genome Res.">
        <title>Skewed genomic variability in strains of the toxigenic bacterial pathogen, Clostridium perfringens.</title>
        <authorList>
            <person name="Myers G.S.A."/>
            <person name="Rasko D.A."/>
            <person name="Cheung J.K."/>
            <person name="Ravel J."/>
            <person name="Seshadri R."/>
            <person name="DeBoy R.T."/>
            <person name="Ren Q."/>
            <person name="Varga J."/>
            <person name="Awad M.M."/>
            <person name="Brinkac L.M."/>
            <person name="Daugherty S.C."/>
            <person name="Haft D.H."/>
            <person name="Dodson R.J."/>
            <person name="Madupu R."/>
            <person name="Nelson W.C."/>
            <person name="Rosovitz M.J."/>
            <person name="Sullivan S.A."/>
            <person name="Khouri H."/>
            <person name="Dimitrov G.I."/>
            <person name="Watkins K.L."/>
            <person name="Mulligan S."/>
            <person name="Benton J."/>
            <person name="Radune D."/>
            <person name="Fisher D.J."/>
            <person name="Atkins H.S."/>
            <person name="Hiscox T."/>
            <person name="Jost B.H."/>
            <person name="Billington S.J."/>
            <person name="Songer J.G."/>
            <person name="McClane B.A."/>
            <person name="Titball R.W."/>
            <person name="Rood J.I."/>
            <person name="Melville S.B."/>
            <person name="Paulsen I.T."/>
        </authorList>
    </citation>
    <scope>NUCLEOTIDE SEQUENCE [LARGE SCALE GENOMIC DNA]</scope>
    <source>
        <strain>SM101 / Type A</strain>
    </source>
</reference>
<organism>
    <name type="scientific">Clostridium perfringens (strain SM101 / Type A)</name>
    <dbReference type="NCBI Taxonomy" id="289380"/>
    <lineage>
        <taxon>Bacteria</taxon>
        <taxon>Bacillati</taxon>
        <taxon>Bacillota</taxon>
        <taxon>Clostridia</taxon>
        <taxon>Eubacteriales</taxon>
        <taxon>Clostridiaceae</taxon>
        <taxon>Clostridium</taxon>
    </lineage>
</organism>
<proteinExistence type="inferred from homology"/>
<protein>
    <recommendedName>
        <fullName evidence="1">1-deoxy-D-xylulose-5-phosphate synthase</fullName>
        <ecNumber evidence="1">2.2.1.7</ecNumber>
    </recommendedName>
    <alternativeName>
        <fullName evidence="1">1-deoxyxylulose-5-phosphate synthase</fullName>
        <shortName evidence="1">DXP synthase</shortName>
        <shortName evidence="1">DXPS</shortName>
    </alternativeName>
</protein>
<sequence>MSEILQKITDPKEIKDLDEKELEMLAKELREFLIESVSNTGGHFASNLGVIDLTVALFKNFDFSENRIIWDVGHQSYAYKILTGRKDKFNTLRQYGGLCGFPKRTESEYDFFATGHSSTSLSSAAGMARAQKILGKDNKVIAVIGDGALTGGMALEALNDIGYRKDNLIIILNDNQMSICKNVGGLATYLNKLRMGVGYNKLKSDIGSTLDTTSLGKRVKNSLSKLKDGIKKIVVPSMYFEDIGLKYFGIVDGHNIRELNEVLSIAKSIKGPVIIHTVTKKGKGYELAEKNPNKYHGVSPFDLGEGVISKFANRNYSSTFGEEMIKLAKNDDKVVAITAAMPDGTGLKDFREEFPDRFFDVGIAEQHAVTLAAGMAAEGLKPFFAVYSTFLQRAYDQVLHDVCIQNLPVTLCLDRAGLVGEDGETHQGIFDISFLSPMPNMTIVAPKCIDEMEVILKWASNFNAPLAIRYPRGGDIDVNLKPLSKIEYGKWEKVQEGEKIAIVATGKMVQHAMIAAQKIKEEKNIDILIINATFIKPIDKELLNSLSKDGFKIVTIEDNIKKGGFGEGVLEYLNEIGHEEKIVTLAFNDKFIEHGKPDILYRINGLDAEGIKNTLIELL</sequence>
<name>DXS_CLOPS</name>
<accession>Q0SS05</accession>
<keyword id="KW-0414">Isoprene biosynthesis</keyword>
<keyword id="KW-0460">Magnesium</keyword>
<keyword id="KW-0479">Metal-binding</keyword>
<keyword id="KW-0784">Thiamine biosynthesis</keyword>
<keyword id="KW-0786">Thiamine pyrophosphate</keyword>
<keyword id="KW-0808">Transferase</keyword>
<dbReference type="EC" id="2.2.1.7" evidence="1"/>
<dbReference type="EMBL" id="CP000312">
    <property type="protein sequence ID" value="ABG86715.1"/>
    <property type="molecule type" value="Genomic_DNA"/>
</dbReference>
<dbReference type="RefSeq" id="WP_011592689.1">
    <property type="nucleotide sequence ID" value="NC_008262.1"/>
</dbReference>
<dbReference type="SMR" id="Q0SS05"/>
<dbReference type="KEGG" id="cpr:CPR_1787"/>
<dbReference type="UniPathway" id="UPA00064">
    <property type="reaction ID" value="UER00091"/>
</dbReference>
<dbReference type="Proteomes" id="UP000001824">
    <property type="component" value="Chromosome"/>
</dbReference>
<dbReference type="GO" id="GO:0005829">
    <property type="term" value="C:cytosol"/>
    <property type="evidence" value="ECO:0007669"/>
    <property type="project" value="TreeGrafter"/>
</dbReference>
<dbReference type="GO" id="GO:0008661">
    <property type="term" value="F:1-deoxy-D-xylulose-5-phosphate synthase activity"/>
    <property type="evidence" value="ECO:0007669"/>
    <property type="project" value="UniProtKB-UniRule"/>
</dbReference>
<dbReference type="GO" id="GO:0000287">
    <property type="term" value="F:magnesium ion binding"/>
    <property type="evidence" value="ECO:0007669"/>
    <property type="project" value="UniProtKB-UniRule"/>
</dbReference>
<dbReference type="GO" id="GO:0030976">
    <property type="term" value="F:thiamine pyrophosphate binding"/>
    <property type="evidence" value="ECO:0007669"/>
    <property type="project" value="UniProtKB-UniRule"/>
</dbReference>
<dbReference type="GO" id="GO:0052865">
    <property type="term" value="P:1-deoxy-D-xylulose 5-phosphate biosynthetic process"/>
    <property type="evidence" value="ECO:0007669"/>
    <property type="project" value="UniProtKB-UniPathway"/>
</dbReference>
<dbReference type="GO" id="GO:0019288">
    <property type="term" value="P:isopentenyl diphosphate biosynthetic process, methylerythritol 4-phosphate pathway"/>
    <property type="evidence" value="ECO:0007669"/>
    <property type="project" value="TreeGrafter"/>
</dbReference>
<dbReference type="GO" id="GO:0016114">
    <property type="term" value="P:terpenoid biosynthetic process"/>
    <property type="evidence" value="ECO:0007669"/>
    <property type="project" value="UniProtKB-UniRule"/>
</dbReference>
<dbReference type="GO" id="GO:0009228">
    <property type="term" value="P:thiamine biosynthetic process"/>
    <property type="evidence" value="ECO:0007669"/>
    <property type="project" value="UniProtKB-UniRule"/>
</dbReference>
<dbReference type="CDD" id="cd02007">
    <property type="entry name" value="TPP_DXS"/>
    <property type="match status" value="1"/>
</dbReference>
<dbReference type="CDD" id="cd07033">
    <property type="entry name" value="TPP_PYR_DXS_TK_like"/>
    <property type="match status" value="1"/>
</dbReference>
<dbReference type="FunFam" id="3.40.50.970:FF:000005">
    <property type="entry name" value="1-deoxy-D-xylulose-5-phosphate synthase"/>
    <property type="match status" value="1"/>
</dbReference>
<dbReference type="Gene3D" id="3.40.50.920">
    <property type="match status" value="1"/>
</dbReference>
<dbReference type="Gene3D" id="3.40.50.970">
    <property type="match status" value="2"/>
</dbReference>
<dbReference type="HAMAP" id="MF_00315">
    <property type="entry name" value="DXP_synth"/>
    <property type="match status" value="1"/>
</dbReference>
<dbReference type="InterPro" id="IPR005477">
    <property type="entry name" value="Dxylulose-5-P_synthase"/>
</dbReference>
<dbReference type="InterPro" id="IPR029061">
    <property type="entry name" value="THDP-binding"/>
</dbReference>
<dbReference type="InterPro" id="IPR009014">
    <property type="entry name" value="Transketo_C/PFOR_II"/>
</dbReference>
<dbReference type="InterPro" id="IPR005475">
    <property type="entry name" value="Transketolase-like_Pyr-bd"/>
</dbReference>
<dbReference type="InterPro" id="IPR020826">
    <property type="entry name" value="Transketolase_BS"/>
</dbReference>
<dbReference type="InterPro" id="IPR033248">
    <property type="entry name" value="Transketolase_C"/>
</dbReference>
<dbReference type="InterPro" id="IPR049557">
    <property type="entry name" value="Transketolase_CS"/>
</dbReference>
<dbReference type="NCBIfam" id="TIGR00204">
    <property type="entry name" value="dxs"/>
    <property type="match status" value="1"/>
</dbReference>
<dbReference type="NCBIfam" id="NF003933">
    <property type="entry name" value="PRK05444.2-2"/>
    <property type="match status" value="1"/>
</dbReference>
<dbReference type="PANTHER" id="PTHR43322">
    <property type="entry name" value="1-D-DEOXYXYLULOSE 5-PHOSPHATE SYNTHASE-RELATED"/>
    <property type="match status" value="1"/>
</dbReference>
<dbReference type="PANTHER" id="PTHR43322:SF5">
    <property type="entry name" value="1-DEOXY-D-XYLULOSE-5-PHOSPHATE SYNTHASE, CHLOROPLASTIC"/>
    <property type="match status" value="1"/>
</dbReference>
<dbReference type="Pfam" id="PF13292">
    <property type="entry name" value="DXP_synthase_N"/>
    <property type="match status" value="1"/>
</dbReference>
<dbReference type="Pfam" id="PF02779">
    <property type="entry name" value="Transket_pyr"/>
    <property type="match status" value="1"/>
</dbReference>
<dbReference type="Pfam" id="PF02780">
    <property type="entry name" value="Transketolase_C"/>
    <property type="match status" value="1"/>
</dbReference>
<dbReference type="SMART" id="SM00861">
    <property type="entry name" value="Transket_pyr"/>
    <property type="match status" value="1"/>
</dbReference>
<dbReference type="SUPFAM" id="SSF52518">
    <property type="entry name" value="Thiamin diphosphate-binding fold (THDP-binding)"/>
    <property type="match status" value="2"/>
</dbReference>
<dbReference type="SUPFAM" id="SSF52922">
    <property type="entry name" value="TK C-terminal domain-like"/>
    <property type="match status" value="1"/>
</dbReference>
<dbReference type="PROSITE" id="PS00801">
    <property type="entry name" value="TRANSKETOLASE_1"/>
    <property type="match status" value="1"/>
</dbReference>
<dbReference type="PROSITE" id="PS00802">
    <property type="entry name" value="TRANSKETOLASE_2"/>
    <property type="match status" value="1"/>
</dbReference>
<evidence type="ECO:0000255" key="1">
    <source>
        <dbReference type="HAMAP-Rule" id="MF_00315"/>
    </source>
</evidence>
<feature type="chain" id="PRO_0000256402" description="1-deoxy-D-xylulose-5-phosphate synthase">
    <location>
        <begin position="1"/>
        <end position="619"/>
    </location>
</feature>
<feature type="binding site" evidence="1">
    <location>
        <position position="74"/>
    </location>
    <ligand>
        <name>thiamine diphosphate</name>
        <dbReference type="ChEBI" id="CHEBI:58937"/>
    </ligand>
</feature>
<feature type="binding site" evidence="1">
    <location>
        <begin position="115"/>
        <end position="117"/>
    </location>
    <ligand>
        <name>thiamine diphosphate</name>
        <dbReference type="ChEBI" id="CHEBI:58937"/>
    </ligand>
</feature>
<feature type="binding site" evidence="1">
    <location>
        <position position="146"/>
    </location>
    <ligand>
        <name>Mg(2+)</name>
        <dbReference type="ChEBI" id="CHEBI:18420"/>
    </ligand>
</feature>
<feature type="binding site" evidence="1">
    <location>
        <begin position="147"/>
        <end position="148"/>
    </location>
    <ligand>
        <name>thiamine diphosphate</name>
        <dbReference type="ChEBI" id="CHEBI:58937"/>
    </ligand>
</feature>
<feature type="binding site" evidence="1">
    <location>
        <position position="175"/>
    </location>
    <ligand>
        <name>Mg(2+)</name>
        <dbReference type="ChEBI" id="CHEBI:18420"/>
    </ligand>
</feature>
<feature type="binding site" evidence="1">
    <location>
        <position position="175"/>
    </location>
    <ligand>
        <name>thiamine diphosphate</name>
        <dbReference type="ChEBI" id="CHEBI:58937"/>
    </ligand>
</feature>
<feature type="binding site" evidence="1">
    <location>
        <position position="285"/>
    </location>
    <ligand>
        <name>thiamine diphosphate</name>
        <dbReference type="ChEBI" id="CHEBI:58937"/>
    </ligand>
</feature>
<feature type="binding site" evidence="1">
    <location>
        <position position="365"/>
    </location>
    <ligand>
        <name>thiamine diphosphate</name>
        <dbReference type="ChEBI" id="CHEBI:58937"/>
    </ligand>
</feature>